<gene>
    <name type="primary">shh</name>
</gene>
<name>SHH_DANAP</name>
<proteinExistence type="inferred from homology"/>
<sequence>YGRRRHPKKLTPLAYKQFIPNVAEKTLGASGRYEGKITRNSERFKELTPNYNPDIIFKDEENTVMNHWPGVKLRVTEGWDEDGHHFEESLHYEGRAVDITTSDRDKSKYGTLSRLAVEAGF</sequence>
<evidence type="ECO:0000250" key="1"/>
<evidence type="ECO:0000250" key="2">
    <source>
        <dbReference type="UniProtKB" id="Q15465"/>
    </source>
</evidence>
<evidence type="ECO:0000305" key="3"/>
<dbReference type="EMBL" id="U51342">
    <property type="protein sequence ID" value="AAB38573.1"/>
    <property type="molecule type" value="Genomic_DNA"/>
</dbReference>
<dbReference type="EMBL" id="U51361">
    <property type="protein sequence ID" value="AAB38591.1"/>
    <property type="molecule type" value="Genomic_DNA"/>
</dbReference>
<dbReference type="SMR" id="P79717"/>
<dbReference type="GO" id="GO:0005615">
    <property type="term" value="C:extracellular space"/>
    <property type="evidence" value="ECO:0007669"/>
    <property type="project" value="TreeGrafter"/>
</dbReference>
<dbReference type="GO" id="GO:0005886">
    <property type="term" value="C:plasma membrane"/>
    <property type="evidence" value="ECO:0007669"/>
    <property type="project" value="UniProtKB-SubCell"/>
</dbReference>
<dbReference type="GO" id="GO:0005509">
    <property type="term" value="F:calcium ion binding"/>
    <property type="evidence" value="ECO:0007669"/>
    <property type="project" value="TreeGrafter"/>
</dbReference>
<dbReference type="GO" id="GO:0005113">
    <property type="term" value="F:patched binding"/>
    <property type="evidence" value="ECO:0007669"/>
    <property type="project" value="TreeGrafter"/>
</dbReference>
<dbReference type="GO" id="GO:0008233">
    <property type="term" value="F:peptidase activity"/>
    <property type="evidence" value="ECO:0007669"/>
    <property type="project" value="UniProtKB-KW"/>
</dbReference>
<dbReference type="GO" id="GO:0048513">
    <property type="term" value="P:animal organ development"/>
    <property type="evidence" value="ECO:0007669"/>
    <property type="project" value="UniProtKB-ARBA"/>
</dbReference>
<dbReference type="GO" id="GO:0048468">
    <property type="term" value="P:cell development"/>
    <property type="evidence" value="ECO:0007669"/>
    <property type="project" value="UniProtKB-ARBA"/>
</dbReference>
<dbReference type="GO" id="GO:0001708">
    <property type="term" value="P:cell fate specification"/>
    <property type="evidence" value="ECO:0007669"/>
    <property type="project" value="TreeGrafter"/>
</dbReference>
<dbReference type="GO" id="GO:0007267">
    <property type="term" value="P:cell-cell signaling"/>
    <property type="evidence" value="ECO:0007669"/>
    <property type="project" value="InterPro"/>
</dbReference>
<dbReference type="GO" id="GO:0007417">
    <property type="term" value="P:central nervous system development"/>
    <property type="evidence" value="ECO:0007669"/>
    <property type="project" value="UniProtKB-ARBA"/>
</dbReference>
<dbReference type="GO" id="GO:0030182">
    <property type="term" value="P:neuron differentiation"/>
    <property type="evidence" value="ECO:0007669"/>
    <property type="project" value="UniProtKB-ARBA"/>
</dbReference>
<dbReference type="GO" id="GO:0006508">
    <property type="term" value="P:proteolysis"/>
    <property type="evidence" value="ECO:0007669"/>
    <property type="project" value="UniProtKB-KW"/>
</dbReference>
<dbReference type="GO" id="GO:0010468">
    <property type="term" value="P:regulation of gene expression"/>
    <property type="evidence" value="ECO:0007669"/>
    <property type="project" value="TreeGrafter"/>
</dbReference>
<dbReference type="GO" id="GO:0007224">
    <property type="term" value="P:smoothened signaling pathway"/>
    <property type="evidence" value="ECO:0007669"/>
    <property type="project" value="TreeGrafter"/>
</dbReference>
<dbReference type="GO" id="GO:0009888">
    <property type="term" value="P:tissue development"/>
    <property type="evidence" value="ECO:0007669"/>
    <property type="project" value="UniProtKB-ARBA"/>
</dbReference>
<dbReference type="Gene3D" id="3.30.1380.10">
    <property type="match status" value="1"/>
</dbReference>
<dbReference type="InterPro" id="IPR001657">
    <property type="entry name" value="Hedgehog"/>
</dbReference>
<dbReference type="InterPro" id="IPR009045">
    <property type="entry name" value="Hedgehog_sig/DD-Pept_Zn-bd_sf"/>
</dbReference>
<dbReference type="InterPro" id="IPR050387">
    <property type="entry name" value="Hedgehog_Signaling"/>
</dbReference>
<dbReference type="InterPro" id="IPR000320">
    <property type="entry name" value="Hedgehog_signalling_dom"/>
</dbReference>
<dbReference type="PANTHER" id="PTHR11889">
    <property type="entry name" value="HEDGEHOG"/>
    <property type="match status" value="1"/>
</dbReference>
<dbReference type="PANTHER" id="PTHR11889:SF36">
    <property type="entry name" value="SONIC HEDGEHOG PROTEIN"/>
    <property type="match status" value="1"/>
</dbReference>
<dbReference type="Pfam" id="PF01085">
    <property type="entry name" value="HH_signal"/>
    <property type="match status" value="1"/>
</dbReference>
<dbReference type="PRINTS" id="PR00632">
    <property type="entry name" value="SONICHHOG"/>
</dbReference>
<dbReference type="SUPFAM" id="SSF55166">
    <property type="entry name" value="Hedgehog/DD-peptidase"/>
    <property type="match status" value="1"/>
</dbReference>
<comment type="function">
    <text evidence="1">Intercellular signal essential for a variety of patterning events during development. Signal produced by the notochord that induces somite patterning, dorso-ventral patterning of the brain and early patterning of the developing eyes. Displays floor plate-inducing activity. Binds to the patched (PTC) receptor, which functions in association with smoothened (SMO), to activate the transcription of target genes. In the absence of SHH, PTC represses the constitutive signaling activity of SMO (By similarity).</text>
</comment>
<comment type="subunit">
    <text evidence="1">N-product is active as a multimer.</text>
</comment>
<comment type="subcellular location">
    <subcellularLocation>
        <location evidence="1">Secreted</location>
    </subcellularLocation>
    <subcellularLocation>
        <location evidence="1">Cell membrane</location>
    </subcellularLocation>
    <text evidence="1">Sonic hedgehog protein C-product: Secreted, extracellular space. Sonic hedgehog protein N-product: Cell membrane; Lipid-anchor. The C-terminal peptide diffuses from the cell, while the N-product either remains associated with lipid rafts at the cell surface, or forms freely diffusible active multimers with its hydrophobic lipid-modified N- and C-termini buried inside.</text>
</comment>
<comment type="domain">
    <text evidence="1">The sonic hedgehog protein N-product binds calcium and zinc ions; this stabilizes the protein fold and is essential for protein-protein interactions mediated by this domain.</text>
</comment>
<comment type="PTM">
    <text>The C-terminal domain displays an autoproteolysis activity and a cholesterol transferase activity. Both activities result in the cleavage of the full-length protein and covalent attachment of a cholesterol moiety to the C-terminal of the newly generated N-terminal fragment (N-product). The N-product is the active species in both local and long-range signaling, whereas the C-product has no signaling activity.</text>
</comment>
<comment type="PTM">
    <text evidence="1">Cholesterylation is required for N-product targeting to lipid rafts and multimerization.</text>
</comment>
<comment type="PTM">
    <text evidence="1">N-palmitoylation is required for N-product multimerization and full activity.</text>
</comment>
<comment type="similarity">
    <text evidence="3">Belongs to the hedgehog family.</text>
</comment>
<protein>
    <recommendedName>
        <fullName>Sonic hedgehog protein</fullName>
        <shortName>SHH</shortName>
    </recommendedName>
</protein>
<feature type="chain" id="PRO_0000058728" description="Sonic hedgehog protein">
    <location>
        <begin position="1" status="less than"/>
        <end position="121" status="greater than"/>
    </location>
</feature>
<feature type="binding site" evidence="2">
    <location>
        <position position="60"/>
    </location>
    <ligand>
        <name>Ca(2+)</name>
        <dbReference type="ChEBI" id="CHEBI:29108"/>
        <label>1</label>
    </ligand>
</feature>
<feature type="binding site" evidence="2">
    <location>
        <position position="61"/>
    </location>
    <ligand>
        <name>Ca(2+)</name>
        <dbReference type="ChEBI" id="CHEBI:29108"/>
        <label>1</label>
    </ligand>
</feature>
<feature type="binding site" evidence="2">
    <location>
        <position position="61"/>
    </location>
    <ligand>
        <name>Ca(2+)</name>
        <dbReference type="ChEBI" id="CHEBI:29108"/>
        <label>2</label>
    </ligand>
</feature>
<feature type="binding site" evidence="2">
    <location>
        <position position="76"/>
    </location>
    <ligand>
        <name>Ca(2+)</name>
        <dbReference type="ChEBI" id="CHEBI:29108"/>
        <label>1</label>
    </ligand>
</feature>
<feature type="binding site" evidence="2">
    <location>
        <position position="77"/>
    </location>
    <ligand>
        <name>Ca(2+)</name>
        <dbReference type="ChEBI" id="CHEBI:29108"/>
        <label>1</label>
    </ligand>
</feature>
<feature type="binding site" evidence="2">
    <location>
        <position position="77"/>
    </location>
    <ligand>
        <name>Ca(2+)</name>
        <dbReference type="ChEBI" id="CHEBI:29108"/>
        <label>2</label>
    </ligand>
</feature>
<feature type="binding site" evidence="2">
    <location>
        <position position="80"/>
    </location>
    <ligand>
        <name>Ca(2+)</name>
        <dbReference type="ChEBI" id="CHEBI:29108"/>
        <label>2</label>
    </ligand>
</feature>
<feature type="binding site" evidence="2">
    <location>
        <position position="82"/>
    </location>
    <ligand>
        <name>Ca(2+)</name>
        <dbReference type="ChEBI" id="CHEBI:29108"/>
        <label>2</label>
    </ligand>
</feature>
<feature type="binding site" evidence="2">
    <location>
        <position position="91"/>
    </location>
    <ligand>
        <name>Zn(2+)</name>
        <dbReference type="ChEBI" id="CHEBI:29105"/>
    </ligand>
</feature>
<feature type="binding site" evidence="2">
    <location>
        <position position="98"/>
    </location>
    <ligand>
        <name>Zn(2+)</name>
        <dbReference type="ChEBI" id="CHEBI:29105"/>
    </ligand>
</feature>
<feature type="non-consecutive residues" evidence="3">
    <location>
        <begin position="63"/>
        <end position="64"/>
    </location>
</feature>
<feature type="non-terminal residue">
    <location>
        <position position="1"/>
    </location>
</feature>
<feature type="non-terminal residue">
    <location>
        <position position="121"/>
    </location>
</feature>
<reference key="1">
    <citation type="journal article" date="1996" name="Proc. Natl. Acad. Sci. U.S.A.">
        <title>Evolutionary analyses of hedgehog and Hoxd-10 genes in fish species closely related to the zebrafish.</title>
        <authorList>
            <person name="Zardoya R."/>
            <person name="Abouheif E."/>
            <person name="Meyer A."/>
        </authorList>
    </citation>
    <scope>NUCLEOTIDE SEQUENCE [GENOMIC DNA]</scope>
    <source>
        <tissue>Muscle</tissue>
    </source>
</reference>
<accession>P79717</accession>
<accession>P79718</accession>
<keyword id="KW-0068">Autocatalytic cleavage</keyword>
<keyword id="KW-0106">Calcium</keyword>
<keyword id="KW-1003">Cell membrane</keyword>
<keyword id="KW-0217">Developmental protein</keyword>
<keyword id="KW-0378">Hydrolase</keyword>
<keyword id="KW-0449">Lipoprotein</keyword>
<keyword id="KW-0472">Membrane</keyword>
<keyword id="KW-0479">Metal-binding</keyword>
<keyword id="KW-0564">Palmitate</keyword>
<keyword id="KW-0645">Protease</keyword>
<keyword id="KW-0964">Secreted</keyword>
<keyword id="KW-0862">Zinc</keyword>
<organism>
    <name type="scientific">Danio albolineatus pulcher</name>
    <name type="common">Blue-redstripe danio</name>
    <dbReference type="NCBI Taxonomy" id="38751"/>
    <lineage>
        <taxon>Eukaryota</taxon>
        <taxon>Metazoa</taxon>
        <taxon>Chordata</taxon>
        <taxon>Craniata</taxon>
        <taxon>Vertebrata</taxon>
        <taxon>Euteleostomi</taxon>
        <taxon>Actinopterygii</taxon>
        <taxon>Neopterygii</taxon>
        <taxon>Teleostei</taxon>
        <taxon>Ostariophysi</taxon>
        <taxon>Cypriniformes</taxon>
        <taxon>Danionidae</taxon>
        <taxon>Danioninae</taxon>
        <taxon>Danio</taxon>
    </lineage>
</organism>